<organism>
    <name type="scientific">Methanothermobacter thermautotrophicus (strain ATCC 29096 / DSM 1053 / JCM 10044 / NBRC 100330 / Delta H)</name>
    <name type="common">Methanobacterium thermoautotrophicum</name>
    <dbReference type="NCBI Taxonomy" id="187420"/>
    <lineage>
        <taxon>Archaea</taxon>
        <taxon>Methanobacteriati</taxon>
        <taxon>Methanobacteriota</taxon>
        <taxon>Methanomada group</taxon>
        <taxon>Methanobacteria</taxon>
        <taxon>Methanobacteriales</taxon>
        <taxon>Methanobacteriaceae</taxon>
        <taxon>Methanothermobacter</taxon>
    </lineage>
</organism>
<feature type="chain" id="PRO_0000107450" description="6-hydroxymethyl-7,8-dihydropterin pyrophosphokinase">
    <location>
        <begin position="1"/>
        <end position="232"/>
    </location>
</feature>
<proteinExistence type="inferred from homology"/>
<evidence type="ECO:0000255" key="1">
    <source>
        <dbReference type="HAMAP-Rule" id="MF_02131"/>
    </source>
</evidence>
<dbReference type="EC" id="2.7.6.3" evidence="1"/>
<dbReference type="EMBL" id="AE000666">
    <property type="protein sequence ID" value="AAB86073.1"/>
    <property type="molecule type" value="Genomic_DNA"/>
</dbReference>
<dbReference type="PIR" id="G69080">
    <property type="entry name" value="G69080"/>
</dbReference>
<dbReference type="RefSeq" id="WP_010877208.1">
    <property type="nucleotide sequence ID" value="NC_000916.1"/>
</dbReference>
<dbReference type="SMR" id="O27637"/>
<dbReference type="FunCoup" id="O27637">
    <property type="interactions" value="7"/>
</dbReference>
<dbReference type="STRING" id="187420.MTH_1600"/>
<dbReference type="PaxDb" id="187420-MTH_1600"/>
<dbReference type="EnsemblBacteria" id="AAB86073">
    <property type="protein sequence ID" value="AAB86073"/>
    <property type="gene ID" value="MTH_1600"/>
</dbReference>
<dbReference type="KEGG" id="mth:MTH_1600"/>
<dbReference type="PATRIC" id="fig|187420.15.peg.1564"/>
<dbReference type="HOGENOM" id="CLU_093043_0_0_2"/>
<dbReference type="InParanoid" id="O27637"/>
<dbReference type="UniPathway" id="UPA00065"/>
<dbReference type="Proteomes" id="UP000005223">
    <property type="component" value="Chromosome"/>
</dbReference>
<dbReference type="GO" id="GO:0003848">
    <property type="term" value="F:2-amino-4-hydroxy-6-hydroxymethyldihydropteridine diphosphokinase activity"/>
    <property type="evidence" value="ECO:0007669"/>
    <property type="project" value="UniProtKB-UniRule"/>
</dbReference>
<dbReference type="GO" id="GO:0005524">
    <property type="term" value="F:ATP binding"/>
    <property type="evidence" value="ECO:0007669"/>
    <property type="project" value="UniProtKB-UniRule"/>
</dbReference>
<dbReference type="GO" id="GO:0016301">
    <property type="term" value="F:kinase activity"/>
    <property type="evidence" value="ECO:0007669"/>
    <property type="project" value="UniProtKB-KW"/>
</dbReference>
<dbReference type="GO" id="GO:0000287">
    <property type="term" value="F:magnesium ion binding"/>
    <property type="evidence" value="ECO:0007669"/>
    <property type="project" value="UniProtKB-UniRule"/>
</dbReference>
<dbReference type="GO" id="GO:0004788">
    <property type="term" value="F:thiamine diphosphokinase activity"/>
    <property type="evidence" value="ECO:0007669"/>
    <property type="project" value="InterPro"/>
</dbReference>
<dbReference type="GO" id="GO:2001118">
    <property type="term" value="P:tetrahydromethanopterin biosynthetic process"/>
    <property type="evidence" value="ECO:0007669"/>
    <property type="project" value="UniProtKB-UniRule"/>
</dbReference>
<dbReference type="GO" id="GO:0009229">
    <property type="term" value="P:thiamine diphosphate biosynthetic process"/>
    <property type="evidence" value="ECO:0007669"/>
    <property type="project" value="InterPro"/>
</dbReference>
<dbReference type="HAMAP" id="MF_02131">
    <property type="entry name" value="HMPDK_arch"/>
    <property type="match status" value="1"/>
</dbReference>
<dbReference type="InterPro" id="IPR027510">
    <property type="entry name" value="HMPDK_MptE"/>
</dbReference>
<dbReference type="InterPro" id="IPR002826">
    <property type="entry name" value="MptE-like"/>
</dbReference>
<dbReference type="InterPro" id="IPR036759">
    <property type="entry name" value="TPK_catalytic_sf"/>
</dbReference>
<dbReference type="PANTHER" id="PTHR39648">
    <property type="entry name" value="6-HYDROXYMETHYL-7,8-DIHYDROPTERIN PYROPHOSPHOKINASE"/>
    <property type="match status" value="1"/>
</dbReference>
<dbReference type="PANTHER" id="PTHR39648:SF1">
    <property type="entry name" value="6-HYDROXYMETHYL-7,8-DIHYDROPTERIN PYROPHOSPHOKINASE"/>
    <property type="match status" value="1"/>
</dbReference>
<dbReference type="Pfam" id="PF01973">
    <property type="entry name" value="MptE-like"/>
    <property type="match status" value="1"/>
</dbReference>
<dbReference type="SUPFAM" id="SSF63999">
    <property type="entry name" value="Thiamin pyrophosphokinase, catalytic domain"/>
    <property type="match status" value="1"/>
</dbReference>
<protein>
    <recommendedName>
        <fullName evidence="1">6-hydroxymethyl-7,8-dihydropterin pyrophosphokinase</fullName>
        <shortName evidence="1">HPPK</shortName>
        <ecNumber evidence="1">2.7.6.3</ecNumber>
    </recommendedName>
    <alternativeName>
        <fullName evidence="1">2-amino-4-hydroxy-6-hydroxymethyldihydropteridine pyrophosphokinase</fullName>
    </alternativeName>
    <alternativeName>
        <fullName evidence="1">6-hydroxymethyl-7,8-dihydropterin diphosphokinase</fullName>
        <shortName evidence="1">6-HMPDK</shortName>
    </alternativeName>
    <alternativeName>
        <fullName evidence="1">7,8-dihydro-6-hydroxymethylpterin diphosphokinase</fullName>
    </alternativeName>
    <alternativeName>
        <fullName evidence="1">7,8-dihydro-6-hydroxymethylpterin pyrophosphokinase</fullName>
        <shortName evidence="1">PPPK</shortName>
    </alternativeName>
</protein>
<keyword id="KW-0067">ATP-binding</keyword>
<keyword id="KW-0418">Kinase</keyword>
<keyword id="KW-0460">Magnesium</keyword>
<keyword id="KW-0547">Nucleotide-binding</keyword>
<keyword id="KW-1185">Reference proteome</keyword>
<keyword id="KW-0808">Transferase</keyword>
<gene>
    <name evidence="1" type="primary">mptE</name>
    <name type="ordered locus">MTH_1600</name>
</gene>
<reference key="1">
    <citation type="journal article" date="1997" name="J. Bacteriol.">
        <title>Complete genome sequence of Methanobacterium thermoautotrophicum deltaH: functional analysis and comparative genomics.</title>
        <authorList>
            <person name="Smith D.R."/>
            <person name="Doucette-Stamm L.A."/>
            <person name="Deloughery C."/>
            <person name="Lee H.-M."/>
            <person name="Dubois J."/>
            <person name="Aldredge T."/>
            <person name="Bashirzadeh R."/>
            <person name="Blakely D."/>
            <person name="Cook R."/>
            <person name="Gilbert K."/>
            <person name="Harrison D."/>
            <person name="Hoang L."/>
            <person name="Keagle P."/>
            <person name="Lumm W."/>
            <person name="Pothier B."/>
            <person name="Qiu D."/>
            <person name="Spadafora R."/>
            <person name="Vicare R."/>
            <person name="Wang Y."/>
            <person name="Wierzbowski J."/>
            <person name="Gibson R."/>
            <person name="Jiwani N."/>
            <person name="Caruso A."/>
            <person name="Bush D."/>
            <person name="Safer H."/>
            <person name="Patwell D."/>
            <person name="Prabhakar S."/>
            <person name="McDougall S."/>
            <person name="Shimer G."/>
            <person name="Goyal A."/>
            <person name="Pietrovski S."/>
            <person name="Church G.M."/>
            <person name="Daniels C.J."/>
            <person name="Mao J.-I."/>
            <person name="Rice P."/>
            <person name="Noelling J."/>
            <person name="Reeve J.N."/>
        </authorList>
    </citation>
    <scope>NUCLEOTIDE SEQUENCE [LARGE SCALE GENOMIC DNA]</scope>
    <source>
        <strain>ATCC 29096 / DSM 1053 / JCM 10044 / NBRC 100330 / Delta H</strain>
    </source>
</reference>
<accession>O27637</accession>
<comment type="function">
    <text evidence="1">Catalyzes the transfer of diphosphate from ATP to 6-hydroxymethyl-7,8-dihydropterin (6-HMD), leading to 6-hydroxymethyl-7,8-dihydropterin diphosphate (6-HMDP).</text>
</comment>
<comment type="catalytic activity">
    <reaction evidence="1">
        <text>6-hydroxymethyl-7,8-dihydropterin + ATP = (7,8-dihydropterin-6-yl)methyl diphosphate + AMP + H(+)</text>
        <dbReference type="Rhea" id="RHEA:11412"/>
        <dbReference type="ChEBI" id="CHEBI:15378"/>
        <dbReference type="ChEBI" id="CHEBI:30616"/>
        <dbReference type="ChEBI" id="CHEBI:44841"/>
        <dbReference type="ChEBI" id="CHEBI:72950"/>
        <dbReference type="ChEBI" id="CHEBI:456215"/>
        <dbReference type="EC" id="2.7.6.3"/>
    </reaction>
</comment>
<comment type="cofactor">
    <cofactor evidence="1">
        <name>Mg(2+)</name>
        <dbReference type="ChEBI" id="CHEBI:18420"/>
    </cofactor>
</comment>
<comment type="pathway">
    <text evidence="1">Cofactor biosynthesis; 5,6,7,8-tetrahydromethanopterin biosynthesis.</text>
</comment>
<comment type="similarity">
    <text evidence="1">Belongs to the archaeal 6-HMPDK family.</text>
</comment>
<sequence>MEVQVWLRWYTRILDDFGFDRRADEESASYLDAFLREHGCLRVDDIDVPSSDFIVFGAGPSLRSHLKRFRALDEPMTVISADGATTALLEEDVLPDIIVTDLDGKMEDIIEANRQGAVVVVHAHGNNLPALRRYLPLLQNIIGTTQSIPHGCLHNFGGFTDGDRAVFLAAALGAGRIVLAGMDFGEVVTRYSRPDMDSELGPADPVKRLKLEYASRLIDWLERNGDVRIERW</sequence>
<name>MPTE_METTH</name>